<gene>
    <name type="primary">yjgL</name>
    <name type="ordered locus">b4253</name>
    <name type="ordered locus">JW5757</name>
</gene>
<name>YJGL_ECOLI</name>
<sequence length="604" mass="69578">MSKISDLNYSQHITLADNFKQKSEVLNTWRVGMNDFARIAGGQDNRRNILSPGAFLEFLAKIFTLGYVDFSKRSNEAGRNMMAHIKSSSYSKDTNGNEKMKFYMNNPVGERADSPKVIIEISLSTITTMGTRQGHTAIIFPQPDGSTNRYEGKSFERKDESSLHLITNKVLACYQSEANKKIARLLNNNQELNNLQKLNNLQKLNNLLKLNNIQGLNNPQELNNPQNLNDSQELNNSQELNSPQELNDPQELNNSQDLNNSKVSCTVSVDSTITGLLKEPLNNALLAIRNEHLLLMPHVCDESISYLLGEKGILEEIDKLYALNDHGIDNDKVGNNEINDIKVNLSHILIDSLDDAKVNLTPVIDSILETFSKSPYINDVRILDWCFNKSMQYFDDTKKIKHACSVINHINLRSDQSKIAETLFFNLDKEPYKNSPELQGLIWNKLVVYVNEFNLSNREKTNLIQRLFDNVESIFNEVPVSILVNDIFMNDFFMKNPEMINWYFPQLLKSYEGEKIYFDNLKYDLNDNDKESNKEILKNQPDNVIKEKLNNEYKLRFRMMQTILQSRVNVLPYINEQRLNKLNPPENLRIAIEHFGWKNRPITA</sequence>
<proteinExistence type="evidence at protein level"/>
<organism>
    <name type="scientific">Escherichia coli (strain K12)</name>
    <dbReference type="NCBI Taxonomy" id="83333"/>
    <lineage>
        <taxon>Bacteria</taxon>
        <taxon>Pseudomonadati</taxon>
        <taxon>Pseudomonadota</taxon>
        <taxon>Gammaproteobacteria</taxon>
        <taxon>Enterobacterales</taxon>
        <taxon>Enterobacteriaceae</taxon>
        <taxon>Escherichia</taxon>
    </lineage>
</organism>
<keyword id="KW-1185">Reference proteome</keyword>
<comment type="interaction">
    <interactant intactId="EBI-549937">
        <id>P39336</id>
    </interactant>
    <interactant intactId="EBI-552928">
        <id>P00956</id>
        <label>ileS</label>
    </interactant>
    <organismsDiffer>false</organismsDiffer>
    <experiments>3</experiments>
</comment>
<comment type="interaction">
    <interactant intactId="EBI-549937">
        <id>P39336</id>
    </interactant>
    <interactant intactId="EBI-542264">
        <id>P0ADZ0</id>
        <label>rplW</label>
    </interactant>
    <organismsDiffer>false</organismsDiffer>
    <experiments>2</experiments>
</comment>
<comment type="sequence caution" evidence="2">
    <conflict type="erroneous initiation">
        <sequence resource="EMBL-CDS" id="AAA97149"/>
    </conflict>
    <text>Extended N-terminus.</text>
</comment>
<evidence type="ECO:0000256" key="1">
    <source>
        <dbReference type="SAM" id="MobiDB-lite"/>
    </source>
</evidence>
<evidence type="ECO:0000305" key="2"/>
<dbReference type="EMBL" id="U14003">
    <property type="protein sequence ID" value="AAA97149.1"/>
    <property type="status" value="ALT_INIT"/>
    <property type="molecule type" value="Genomic_DNA"/>
</dbReference>
<dbReference type="EMBL" id="U00096">
    <property type="protein sequence ID" value="AAC77210.2"/>
    <property type="molecule type" value="Genomic_DNA"/>
</dbReference>
<dbReference type="EMBL" id="AP009048">
    <property type="protein sequence ID" value="BAE78250.1"/>
    <property type="molecule type" value="Genomic_DNA"/>
</dbReference>
<dbReference type="PIR" id="S56478">
    <property type="entry name" value="S56478"/>
</dbReference>
<dbReference type="RefSeq" id="NP_418674.2">
    <property type="nucleotide sequence ID" value="NC_000913.3"/>
</dbReference>
<dbReference type="RefSeq" id="WP_000036434.1">
    <property type="nucleotide sequence ID" value="NZ_JACEFS010000014.1"/>
</dbReference>
<dbReference type="BioGRID" id="4261802">
    <property type="interactions" value="40"/>
</dbReference>
<dbReference type="BioGRID" id="853063">
    <property type="interactions" value="5"/>
</dbReference>
<dbReference type="DIP" id="DIP-12607N"/>
<dbReference type="FunCoup" id="P39336">
    <property type="interactions" value="33"/>
</dbReference>
<dbReference type="IntAct" id="P39336">
    <property type="interactions" value="8"/>
</dbReference>
<dbReference type="STRING" id="511145.b4253"/>
<dbReference type="jPOST" id="P39336"/>
<dbReference type="PaxDb" id="511145-b4253"/>
<dbReference type="EnsemblBacteria" id="AAC77210">
    <property type="protein sequence ID" value="AAC77210"/>
    <property type="gene ID" value="b4253"/>
</dbReference>
<dbReference type="GeneID" id="948776"/>
<dbReference type="KEGG" id="ecj:JW5757"/>
<dbReference type="KEGG" id="eco:b4253"/>
<dbReference type="KEGG" id="ecoc:C3026_22945"/>
<dbReference type="PATRIC" id="fig|511145.12.peg.4383"/>
<dbReference type="EchoBASE" id="EB2421"/>
<dbReference type="eggNOG" id="ENOG5031KKI">
    <property type="taxonomic scope" value="Bacteria"/>
</dbReference>
<dbReference type="HOGENOM" id="CLU_027787_1_0_6"/>
<dbReference type="InParanoid" id="P39336"/>
<dbReference type="OMA" id="IMNFVMN"/>
<dbReference type="OrthoDB" id="9987340at2"/>
<dbReference type="BioCyc" id="EcoCyc:G7884-MONOMER"/>
<dbReference type="PRO" id="PR:P39336"/>
<dbReference type="Proteomes" id="UP000000625">
    <property type="component" value="Chromosome"/>
</dbReference>
<dbReference type="Gene3D" id="1.25.40.300">
    <property type="entry name" value="Putative secreted effector protein"/>
    <property type="match status" value="1"/>
</dbReference>
<protein>
    <recommendedName>
        <fullName>Uncharacterized protein YjgL</fullName>
    </recommendedName>
</protein>
<accession>P39336</accession>
<accession>Q2M656</accession>
<feature type="chain" id="PRO_0000169767" description="Uncharacterized protein YjgL">
    <location>
        <begin position="1"/>
        <end position="604"/>
    </location>
</feature>
<feature type="region of interest" description="Disordered" evidence="1">
    <location>
        <begin position="239"/>
        <end position="259"/>
    </location>
</feature>
<reference key="1">
    <citation type="journal article" date="1995" name="Nucleic Acids Res.">
        <title>Analysis of the Escherichia coli genome VI: DNA sequence of the region from 92.8 through 100 minutes.</title>
        <authorList>
            <person name="Burland V.D."/>
            <person name="Plunkett G. III"/>
            <person name="Sofia H.J."/>
            <person name="Daniels D.L."/>
            <person name="Blattner F.R."/>
        </authorList>
    </citation>
    <scope>NUCLEOTIDE SEQUENCE [LARGE SCALE GENOMIC DNA]</scope>
    <source>
        <strain>K12 / MG1655 / ATCC 47076</strain>
    </source>
</reference>
<reference key="2">
    <citation type="journal article" date="1997" name="Science">
        <title>The complete genome sequence of Escherichia coli K-12.</title>
        <authorList>
            <person name="Blattner F.R."/>
            <person name="Plunkett G. III"/>
            <person name="Bloch C.A."/>
            <person name="Perna N.T."/>
            <person name="Burland V."/>
            <person name="Riley M."/>
            <person name="Collado-Vides J."/>
            <person name="Glasner J.D."/>
            <person name="Rode C.K."/>
            <person name="Mayhew G.F."/>
            <person name="Gregor J."/>
            <person name="Davis N.W."/>
            <person name="Kirkpatrick H.A."/>
            <person name="Goeden M.A."/>
            <person name="Rose D.J."/>
            <person name="Mau B."/>
            <person name="Shao Y."/>
        </authorList>
    </citation>
    <scope>NUCLEOTIDE SEQUENCE [LARGE SCALE GENOMIC DNA]</scope>
    <source>
        <strain>K12 / MG1655 / ATCC 47076</strain>
    </source>
</reference>
<reference key="3">
    <citation type="journal article" date="2006" name="Mol. Syst. Biol.">
        <title>Highly accurate genome sequences of Escherichia coli K-12 strains MG1655 and W3110.</title>
        <authorList>
            <person name="Hayashi K."/>
            <person name="Morooka N."/>
            <person name="Yamamoto Y."/>
            <person name="Fujita K."/>
            <person name="Isono K."/>
            <person name="Choi S."/>
            <person name="Ohtsubo E."/>
            <person name="Baba T."/>
            <person name="Wanner B.L."/>
            <person name="Mori H."/>
            <person name="Horiuchi T."/>
        </authorList>
    </citation>
    <scope>NUCLEOTIDE SEQUENCE [LARGE SCALE GENOMIC DNA]</scope>
    <source>
        <strain>K12 / W3110 / ATCC 27325 / DSM 5911</strain>
    </source>
</reference>